<keyword id="KW-0963">Cytoplasm</keyword>
<keyword id="KW-0312">Gluconeogenesis</keyword>
<keyword id="KW-0324">Glycolysis</keyword>
<keyword id="KW-0413">Isomerase</keyword>
<keyword id="KW-1185">Reference proteome</keyword>
<reference key="1">
    <citation type="journal article" date="2005" name="Infect. Immun.">
        <title>Whole-genome analyses of speciation events in pathogenic Brucellae.</title>
        <authorList>
            <person name="Chain P.S."/>
            <person name="Comerci D.J."/>
            <person name="Tolmasky M.E."/>
            <person name="Larimer F.W."/>
            <person name="Malfatti S.A."/>
            <person name="Vergez L.M."/>
            <person name="Aguero F."/>
            <person name="Land M.L."/>
            <person name="Ugalde R.A."/>
            <person name="Garcia E."/>
        </authorList>
    </citation>
    <scope>NUCLEOTIDE SEQUENCE [LARGE SCALE GENOMIC DNA]</scope>
    <source>
        <strain>2308</strain>
    </source>
</reference>
<accession>Q2YPF3</accession>
<sequence length="549" mass="59642">MARDATKLEATVAKLKKHWAESAPRDMRAAFSTDPGRFGRYSLCLDDLLFDWSKCRVNDETMALLKELAVAADVEGRRAAMFAGEHINNTEDRAVLHVALRDTSSKEVLVDGHNVLPDVKHVLDRMAAFADGIRSGALKGATGRKITDIVNIGIGGSDLGPVMATLALAPYHDEPRAHFVSNIDGAHIADTLSPLDPASTLIIVASKTFTTIETMTNAQTARKWVADTLGEAAVGAHFAAVSTALDKVAAFGIPEDRVFGFWDWVGGRYSVWSAIGLPVMIAVGPDNFRKFLAGAHAMDVHFRDAPLEKNLPVMLGLIGYWHRAICGYGSRAIIPYDQRLSRLPAYLQQLDMESNGKSVTLDGKPVSGPTGPVVWGEPGTNGQHAFFQLLHQGTDTIPLEFIVAAKGHEPTLDHQHEMLMANCLAQSEALMKGRTLDEARAQLQAKNLPASQVERIAPHRVFSGNRPSLTLIHDMLDPYALGRLIALYEHRVFVEAQIFGINAFDQWGVELGKELATELLPVVSGKEGASGRDASTQGLVAHLHARRKA</sequence>
<protein>
    <recommendedName>
        <fullName evidence="1">Glucose-6-phosphate isomerase</fullName>
        <shortName evidence="1">GPI</shortName>
        <ecNumber evidence="1">5.3.1.9</ecNumber>
    </recommendedName>
    <alternativeName>
        <fullName evidence="1">Phosphoglucose isomerase</fullName>
        <shortName evidence="1">PGI</shortName>
    </alternativeName>
    <alternativeName>
        <fullName evidence="1">Phosphohexose isomerase</fullName>
        <shortName evidence="1">PHI</shortName>
    </alternativeName>
</protein>
<proteinExistence type="inferred from homology"/>
<name>G6PI_BRUA2</name>
<organism>
    <name type="scientific">Brucella abortus (strain 2308)</name>
    <dbReference type="NCBI Taxonomy" id="359391"/>
    <lineage>
        <taxon>Bacteria</taxon>
        <taxon>Pseudomonadati</taxon>
        <taxon>Pseudomonadota</taxon>
        <taxon>Alphaproteobacteria</taxon>
        <taxon>Hyphomicrobiales</taxon>
        <taxon>Brucellaceae</taxon>
        <taxon>Brucella/Ochrobactrum group</taxon>
        <taxon>Brucella</taxon>
    </lineage>
</organism>
<dbReference type="EC" id="5.3.1.9" evidence="1"/>
<dbReference type="EMBL" id="AM040264">
    <property type="protein sequence ID" value="CAJ10272.1"/>
    <property type="molecule type" value="Genomic_DNA"/>
</dbReference>
<dbReference type="RefSeq" id="WP_002963449.1">
    <property type="nucleotide sequence ID" value="NZ_KN046823.1"/>
</dbReference>
<dbReference type="SMR" id="Q2YPF3"/>
<dbReference type="STRING" id="359391.BAB1_0316"/>
<dbReference type="GeneID" id="93017245"/>
<dbReference type="KEGG" id="bmf:BAB1_0316"/>
<dbReference type="PATRIC" id="fig|359391.11.peg.2362"/>
<dbReference type="HOGENOM" id="CLU_017947_3_1_5"/>
<dbReference type="PhylomeDB" id="Q2YPF3"/>
<dbReference type="UniPathway" id="UPA00109">
    <property type="reaction ID" value="UER00181"/>
</dbReference>
<dbReference type="UniPathway" id="UPA00138"/>
<dbReference type="PRO" id="PR:Q2YPF3"/>
<dbReference type="Proteomes" id="UP000002719">
    <property type="component" value="Chromosome I"/>
</dbReference>
<dbReference type="GO" id="GO:0005829">
    <property type="term" value="C:cytosol"/>
    <property type="evidence" value="ECO:0007669"/>
    <property type="project" value="TreeGrafter"/>
</dbReference>
<dbReference type="GO" id="GO:0097367">
    <property type="term" value="F:carbohydrate derivative binding"/>
    <property type="evidence" value="ECO:0007669"/>
    <property type="project" value="InterPro"/>
</dbReference>
<dbReference type="GO" id="GO:0004347">
    <property type="term" value="F:glucose-6-phosphate isomerase activity"/>
    <property type="evidence" value="ECO:0007669"/>
    <property type="project" value="UniProtKB-UniRule"/>
</dbReference>
<dbReference type="GO" id="GO:0048029">
    <property type="term" value="F:monosaccharide binding"/>
    <property type="evidence" value="ECO:0007669"/>
    <property type="project" value="TreeGrafter"/>
</dbReference>
<dbReference type="GO" id="GO:0006094">
    <property type="term" value="P:gluconeogenesis"/>
    <property type="evidence" value="ECO:0007669"/>
    <property type="project" value="UniProtKB-UniRule"/>
</dbReference>
<dbReference type="GO" id="GO:0051156">
    <property type="term" value="P:glucose 6-phosphate metabolic process"/>
    <property type="evidence" value="ECO:0007669"/>
    <property type="project" value="TreeGrafter"/>
</dbReference>
<dbReference type="GO" id="GO:0006096">
    <property type="term" value="P:glycolytic process"/>
    <property type="evidence" value="ECO:0007669"/>
    <property type="project" value="UniProtKB-UniRule"/>
</dbReference>
<dbReference type="CDD" id="cd05015">
    <property type="entry name" value="SIS_PGI_1"/>
    <property type="match status" value="1"/>
</dbReference>
<dbReference type="CDD" id="cd05016">
    <property type="entry name" value="SIS_PGI_2"/>
    <property type="match status" value="1"/>
</dbReference>
<dbReference type="FunFam" id="3.40.50.10490:FF:000018">
    <property type="entry name" value="Glucose-6-phosphate isomerase"/>
    <property type="match status" value="1"/>
</dbReference>
<dbReference type="Gene3D" id="1.10.1390.10">
    <property type="match status" value="1"/>
</dbReference>
<dbReference type="Gene3D" id="3.40.50.10490">
    <property type="entry name" value="Glucose-6-phosphate isomerase like protein, domain 1"/>
    <property type="match status" value="2"/>
</dbReference>
<dbReference type="HAMAP" id="MF_00473">
    <property type="entry name" value="G6P_isomerase"/>
    <property type="match status" value="1"/>
</dbReference>
<dbReference type="InterPro" id="IPR001672">
    <property type="entry name" value="G6P_Isomerase"/>
</dbReference>
<dbReference type="InterPro" id="IPR023096">
    <property type="entry name" value="G6P_Isomerase_C"/>
</dbReference>
<dbReference type="InterPro" id="IPR018189">
    <property type="entry name" value="Phosphoglucose_isomerase_CS"/>
</dbReference>
<dbReference type="InterPro" id="IPR046348">
    <property type="entry name" value="SIS_dom_sf"/>
</dbReference>
<dbReference type="InterPro" id="IPR035476">
    <property type="entry name" value="SIS_PGI_1"/>
</dbReference>
<dbReference type="InterPro" id="IPR035482">
    <property type="entry name" value="SIS_PGI_2"/>
</dbReference>
<dbReference type="NCBIfam" id="NF001211">
    <property type="entry name" value="PRK00179.1"/>
    <property type="match status" value="1"/>
</dbReference>
<dbReference type="PANTHER" id="PTHR11469">
    <property type="entry name" value="GLUCOSE-6-PHOSPHATE ISOMERASE"/>
    <property type="match status" value="1"/>
</dbReference>
<dbReference type="PANTHER" id="PTHR11469:SF1">
    <property type="entry name" value="GLUCOSE-6-PHOSPHATE ISOMERASE"/>
    <property type="match status" value="1"/>
</dbReference>
<dbReference type="Pfam" id="PF00342">
    <property type="entry name" value="PGI"/>
    <property type="match status" value="1"/>
</dbReference>
<dbReference type="PRINTS" id="PR00662">
    <property type="entry name" value="G6PISOMERASE"/>
</dbReference>
<dbReference type="SUPFAM" id="SSF53697">
    <property type="entry name" value="SIS domain"/>
    <property type="match status" value="1"/>
</dbReference>
<dbReference type="PROSITE" id="PS00765">
    <property type="entry name" value="P_GLUCOSE_ISOMERASE_1"/>
    <property type="match status" value="1"/>
</dbReference>
<dbReference type="PROSITE" id="PS00174">
    <property type="entry name" value="P_GLUCOSE_ISOMERASE_2"/>
    <property type="match status" value="1"/>
</dbReference>
<dbReference type="PROSITE" id="PS51463">
    <property type="entry name" value="P_GLUCOSE_ISOMERASE_3"/>
    <property type="match status" value="1"/>
</dbReference>
<feature type="chain" id="PRO_0000230912" description="Glucose-6-phosphate isomerase">
    <location>
        <begin position="1"/>
        <end position="549"/>
    </location>
</feature>
<feature type="active site" description="Proton donor" evidence="1">
    <location>
        <position position="353"/>
    </location>
</feature>
<feature type="active site" evidence="1">
    <location>
        <position position="384"/>
    </location>
</feature>
<feature type="active site" evidence="1">
    <location>
        <position position="513"/>
    </location>
</feature>
<gene>
    <name evidence="1" type="primary">pgi</name>
    <name type="ordered locus">BAB1_0316</name>
</gene>
<evidence type="ECO:0000255" key="1">
    <source>
        <dbReference type="HAMAP-Rule" id="MF_00473"/>
    </source>
</evidence>
<comment type="function">
    <text evidence="1">Catalyzes the reversible isomerization of glucose-6-phosphate to fructose-6-phosphate.</text>
</comment>
<comment type="catalytic activity">
    <reaction evidence="1">
        <text>alpha-D-glucose 6-phosphate = beta-D-fructose 6-phosphate</text>
        <dbReference type="Rhea" id="RHEA:11816"/>
        <dbReference type="ChEBI" id="CHEBI:57634"/>
        <dbReference type="ChEBI" id="CHEBI:58225"/>
        <dbReference type="EC" id="5.3.1.9"/>
    </reaction>
</comment>
<comment type="pathway">
    <text evidence="1">Carbohydrate biosynthesis; gluconeogenesis.</text>
</comment>
<comment type="pathway">
    <text evidence="1">Carbohydrate degradation; glycolysis; D-glyceraldehyde 3-phosphate and glycerone phosphate from D-glucose: step 2/4.</text>
</comment>
<comment type="subcellular location">
    <subcellularLocation>
        <location evidence="1">Cytoplasm</location>
    </subcellularLocation>
</comment>
<comment type="similarity">
    <text evidence="1">Belongs to the GPI family.</text>
</comment>